<comment type="function">
    <text evidence="1">Hyaluronidase catalyzes the hydrolysis of hyaluronic acid (HA), an anionic, nonsulfated glycosaminoglycan distributed widely throughout connective, epithelial, and neural tissues. In venom, they are known to enhance diffusion of the venom by degrading the extracellular matrix (By similarity).</text>
</comment>
<comment type="catalytic activity">
    <reaction>
        <text>Random hydrolysis of (1-&gt;4)-linkages between N-acetyl-beta-D-glucosamine and D-glucuronate residues in hyaluronate.</text>
        <dbReference type="EC" id="3.2.1.35"/>
    </reaction>
</comment>
<comment type="subcellular location">
    <subcellularLocation>
        <location evidence="1">Secreted</location>
    </subcellularLocation>
</comment>
<comment type="tissue specificity">
    <text>Expressed by the venom duct.</text>
</comment>
<comment type="PTM">
    <text evidence="1">Contains 4 disulfide bonds.</text>
</comment>
<comment type="PTM">
    <text evidence="1">Is N-linked glycosylated at three positions.</text>
</comment>
<comment type="similarity">
    <text evidence="5">Belongs to the glycosyl hydrolase 56 family.</text>
</comment>
<keyword id="KW-1015">Disulfide bond</keyword>
<keyword id="KW-0325">Glycoprotein</keyword>
<keyword id="KW-0326">Glycosidase</keyword>
<keyword id="KW-0378">Hydrolase</keyword>
<keyword id="KW-0964">Secreted</keyword>
<keyword id="KW-0732">Signal</keyword>
<protein>
    <recommendedName>
        <fullName>Hyaluronidase conohyal-ad1</fullName>
        <shortName>Hya</shortName>
        <ecNumber>3.2.1.35</ecNumber>
    </recommendedName>
    <alternativeName>
        <fullName>Hyaluronoglucosaminidase</fullName>
    </alternativeName>
</protein>
<proteinExistence type="evidence at transcript level"/>
<organism>
    <name type="scientific">Conus adamsonii</name>
    <name type="common">Rhododendron cone</name>
    <dbReference type="NCBI Taxonomy" id="1173533"/>
    <lineage>
        <taxon>Eukaryota</taxon>
        <taxon>Metazoa</taxon>
        <taxon>Spiralia</taxon>
        <taxon>Lophotrochozoa</taxon>
        <taxon>Mollusca</taxon>
        <taxon>Gastropoda</taxon>
        <taxon>Caenogastropoda</taxon>
        <taxon>Neogastropoda</taxon>
        <taxon>Conoidea</taxon>
        <taxon>Conidae</taxon>
        <taxon>Conus</taxon>
        <taxon>Textilia</taxon>
    </lineage>
</organism>
<evidence type="ECO:0000250" key="1"/>
<evidence type="ECO:0000255" key="2"/>
<evidence type="ECO:0000255" key="3">
    <source>
        <dbReference type="PROSITE-ProRule" id="PRU00076"/>
    </source>
</evidence>
<evidence type="ECO:0000256" key="4">
    <source>
        <dbReference type="SAM" id="MobiDB-lite"/>
    </source>
</evidence>
<evidence type="ECO:0000305" key="5"/>
<dbReference type="EC" id="3.2.1.35"/>
<dbReference type="EMBL" id="JN697597">
    <property type="protein sequence ID" value="AFH78529.1"/>
    <property type="molecule type" value="mRNA"/>
</dbReference>
<dbReference type="SMR" id="I0CME8"/>
<dbReference type="CAZy" id="GH56">
    <property type="family name" value="Glycoside Hydrolase Family 56"/>
</dbReference>
<dbReference type="ConoServer" id="5536">
    <property type="toxin name" value="conohyal-ad1 precursor"/>
</dbReference>
<dbReference type="GO" id="GO:0005576">
    <property type="term" value="C:extracellular region"/>
    <property type="evidence" value="ECO:0007669"/>
    <property type="project" value="UniProtKB-SubCell"/>
</dbReference>
<dbReference type="GO" id="GO:0004415">
    <property type="term" value="F:hyalurononglucosaminidase activity"/>
    <property type="evidence" value="ECO:0007669"/>
    <property type="project" value="UniProtKB-EC"/>
</dbReference>
<dbReference type="GO" id="GO:0005975">
    <property type="term" value="P:carbohydrate metabolic process"/>
    <property type="evidence" value="ECO:0007669"/>
    <property type="project" value="InterPro"/>
</dbReference>
<dbReference type="GO" id="GO:0030214">
    <property type="term" value="P:hyaluronan catabolic process"/>
    <property type="evidence" value="ECO:0007669"/>
    <property type="project" value="TreeGrafter"/>
</dbReference>
<dbReference type="Gene3D" id="3.20.20.70">
    <property type="entry name" value="Aldolase class I"/>
    <property type="match status" value="1"/>
</dbReference>
<dbReference type="InterPro" id="IPR013785">
    <property type="entry name" value="Aldolase_TIM"/>
</dbReference>
<dbReference type="InterPro" id="IPR017853">
    <property type="entry name" value="Glycoside_hydrolase_SF"/>
</dbReference>
<dbReference type="InterPro" id="IPR018155">
    <property type="entry name" value="Hyaluronidase"/>
</dbReference>
<dbReference type="PANTHER" id="PTHR11769">
    <property type="entry name" value="HYALURONIDASE"/>
    <property type="match status" value="1"/>
</dbReference>
<dbReference type="PANTHER" id="PTHR11769:SF35">
    <property type="entry name" value="HYALURONIDASE"/>
    <property type="match status" value="1"/>
</dbReference>
<dbReference type="Pfam" id="PF01630">
    <property type="entry name" value="Glyco_hydro_56"/>
    <property type="match status" value="1"/>
</dbReference>
<dbReference type="PIRSF" id="PIRSF038193">
    <property type="entry name" value="Hyaluronidase"/>
    <property type="match status" value="1"/>
</dbReference>
<dbReference type="PRINTS" id="PR00846">
    <property type="entry name" value="GLHYDRLASE56"/>
</dbReference>
<dbReference type="SUPFAM" id="SSF51445">
    <property type="entry name" value="(Trans)glycosidases"/>
    <property type="match status" value="1"/>
</dbReference>
<feature type="signal peptide" evidence="2">
    <location>
        <begin position="1"/>
        <end position="18"/>
    </location>
</feature>
<feature type="propeptide" id="PRO_0000419900" evidence="1">
    <location>
        <begin position="19"/>
        <end position="33"/>
    </location>
</feature>
<feature type="chain" id="PRO_0000419901" description="Hyaluronidase conohyal-ad1">
    <location>
        <begin position="34"/>
        <end position="347" status="greater than"/>
    </location>
</feature>
<feature type="region of interest" description="Disordered" evidence="4">
    <location>
        <begin position="27"/>
        <end position="49"/>
    </location>
</feature>
<feature type="compositionally biased region" description="Low complexity" evidence="4">
    <location>
        <begin position="28"/>
        <end position="43"/>
    </location>
</feature>
<feature type="active site" description="Proton donor" evidence="1">
    <location>
        <position position="150"/>
    </location>
</feature>
<feature type="disulfide bond" evidence="3">
    <location>
        <begin position="67"/>
        <end position="343"/>
    </location>
</feature>
<feature type="non-terminal residue">
    <location>
        <position position="347"/>
    </location>
</feature>
<sequence>MRAVVVVTGLVVVVVTTTLSLQDHDVKSASSPLSSSVDQGSSGDDCDEGLPPPDQPFRVVWNHPDNCEKINLHLPLDEYGIIFNKRRVFLGEEIQTLYDTGPWPYINKTGCFINGGLPQLFNQPDNSETCKILGKNRIEDFTGLGVLDFETWRAIYSTNFGTMENYQIESVNLVRKRHPDYSEKELKMVAEQEWQEAARKIMTDKLAAGQSLMPRGYWGYYLYPRTWDSKPDTKFRNNKIDWLWRQSTGLYPSIYIYYDVVSKTDSVITKFVSDTVGEAVRVQNDFSPPNTPIYPYVMFQTMDNVFHKEDHMKISLGLSAKMGAAGVILWGSSQNYKDFTTQCSRLQ</sequence>
<name>HYAL_CONAQ</name>
<reference key="1">
    <citation type="journal article" date="2012" name="Mar. Drugs">
        <title>Recruitment of glycosyl hydrolase proteins in a cone snail venomous arsenal: further insights into biomolecular features of Conus venoms.</title>
        <authorList>
            <person name="Violette A."/>
            <person name="Leonardi A."/>
            <person name="Piquemal D."/>
            <person name="Terrat Y."/>
            <person name="Biass D."/>
            <person name="Dutertre S."/>
            <person name="Noguier F."/>
            <person name="Ducancel F."/>
            <person name="Stocklin R."/>
            <person name="Krizaj I."/>
            <person name="Favreau P."/>
        </authorList>
    </citation>
    <scope>NUCLEOTIDE SEQUENCE [MRNA]</scope>
    <source>
        <tissue>Venom duct</tissue>
    </source>
</reference>
<accession>I0CME8</accession>